<gene>
    <name type="primary">CSP37</name>
    <name type="synonym">CSP30</name>
</gene>
<sequence>MSAGKYLLGTAALVGGVYYYDQYVQPILPRQQHQELAYQTQRVENKGSELNNKLTKKIEEGKKFVNEKTESVTKQVKNSDVYQKLQLNTEDYKKHVEDAVDNDKNVFVVGIQKYIDFVNQLGEVKVQTGTTQYSTVSPNVEVKEKSIFGNWFDKSDNKVDQLKNDADKKINEAKDKAESTKSDFFNWNSKKADELDKKANEAINWTNKQIDYASAEWHKHYEQAKGDWNKALDDLSKQWNDSKKQLNGRFDTEKDRAIKGVEDAKSNFEKLSNDLANDASKNQKLKDAQDHFGKSLENLKLFGDDVYNDFAKRFDDLFNRK</sequence>
<keyword id="KW-0134">Cell wall</keyword>
<keyword id="KW-0964">Secreted</keyword>
<reference key="1">
    <citation type="journal article" date="1997" name="J. Bacteriol.">
        <title>Cloning and characterization of CSP37, a novel gene encoding a putative membrane protein of Candida albicans.</title>
        <authorList>
            <person name="Sentandreu M."/>
            <person name="Nieto A."/>
            <person name="Iborra A."/>
            <person name="Elorza M.V."/>
            <person name="Ponton J."/>
            <person name="Fonzi W.A."/>
            <person name="Sentandreu R."/>
        </authorList>
    </citation>
    <scope>NUCLEOTIDE SEQUENCE [GENOMIC DNA]</scope>
    <source>
        <strain>ATCC 26555</strain>
    </source>
</reference>
<reference key="2">
    <citation type="journal article" date="1995" name="J. Med. Vet. Mycol.">
        <title>Cloning of cDNAs coding for Candida albicans cell surface proteins.</title>
        <authorList>
            <person name="Sentandreu M."/>
            <person name="Elorza M.V."/>
            <person name="Valentin E."/>
            <person name="Sentandreu R."/>
            <person name="Gozalbo D."/>
        </authorList>
    </citation>
    <scope>NUCLEOTIDE SEQUENCE [MRNA] OF 188-321</scope>
    <source>
        <strain>ATCC 26555</strain>
    </source>
</reference>
<organism>
    <name type="scientific">Candida albicans</name>
    <name type="common">Yeast</name>
    <dbReference type="NCBI Taxonomy" id="5476"/>
    <lineage>
        <taxon>Eukaryota</taxon>
        <taxon>Fungi</taxon>
        <taxon>Dikarya</taxon>
        <taxon>Ascomycota</taxon>
        <taxon>Saccharomycotina</taxon>
        <taxon>Pichiomycetes</taxon>
        <taxon>Debaryomycetaceae</taxon>
        <taxon>Candida/Lodderomyces clade</taxon>
        <taxon>Candida</taxon>
    </lineage>
</organism>
<feature type="chain" id="PRO_0000079407" description="37 kDa cell surface protein">
    <location>
        <begin position="1"/>
        <end position="321"/>
    </location>
</feature>
<comment type="subcellular location">
    <subcellularLocation>
        <location>Secreted</location>
        <location>Cell wall</location>
    </subcellularLocation>
</comment>
<name>CSP37_CANAX</name>
<proteinExistence type="evidence at transcript level"/>
<protein>
    <recommendedName>
        <fullName>37 kDa cell surface protein</fullName>
    </recommendedName>
</protein>
<dbReference type="EMBL" id="U89676">
    <property type="protein sequence ID" value="AAB66368.1"/>
    <property type="molecule type" value="Genomic_DNA"/>
</dbReference>
<dbReference type="EMBL" id="S79004">
    <property type="protein sequence ID" value="AAB35168.1"/>
    <property type="molecule type" value="mRNA"/>
</dbReference>
<dbReference type="SMR" id="P53707"/>
<dbReference type="VEuPathDB" id="FungiDB:CAWG_01497"/>
<dbReference type="VEuPathDB" id="FungiDB:CR_01470W_A"/>
<dbReference type="PHI-base" id="PHI:95"/>
<dbReference type="GO" id="GO:0005576">
    <property type="term" value="C:extracellular region"/>
    <property type="evidence" value="ECO:0007669"/>
    <property type="project" value="UniProtKB-KW"/>
</dbReference>
<dbReference type="Gene3D" id="1.20.120.20">
    <property type="entry name" value="Apolipoprotein"/>
    <property type="match status" value="1"/>
</dbReference>
<accession>P53707</accession>